<gene>
    <name evidence="1" type="primary">ompA</name>
</gene>
<name>OMPA_KLEAE</name>
<dbReference type="EMBL" id="X00254">
    <property type="protein sequence ID" value="CAA25062.1"/>
    <property type="molecule type" value="Genomic_DNA"/>
</dbReference>
<dbReference type="PIR" id="S07222">
    <property type="entry name" value="S07222"/>
</dbReference>
<dbReference type="SMR" id="P09146"/>
<dbReference type="STRING" id="548.EAG7_02416"/>
<dbReference type="GO" id="GO:0009279">
    <property type="term" value="C:cell outer membrane"/>
    <property type="evidence" value="ECO:0007669"/>
    <property type="project" value="UniProtKB-SubCell"/>
</dbReference>
<dbReference type="GO" id="GO:0046930">
    <property type="term" value="C:pore complex"/>
    <property type="evidence" value="ECO:0007669"/>
    <property type="project" value="UniProtKB-KW"/>
</dbReference>
<dbReference type="GO" id="GO:0015288">
    <property type="term" value="F:porin activity"/>
    <property type="evidence" value="ECO:0007669"/>
    <property type="project" value="UniProtKB-UniRule"/>
</dbReference>
<dbReference type="GO" id="GO:0034220">
    <property type="term" value="P:monoatomic ion transmembrane transport"/>
    <property type="evidence" value="ECO:0007669"/>
    <property type="project" value="UniProtKB-UniRule"/>
</dbReference>
<dbReference type="CDD" id="cd07185">
    <property type="entry name" value="OmpA_C-like"/>
    <property type="match status" value="1"/>
</dbReference>
<dbReference type="FunFam" id="3.30.1330.60:FF:000004">
    <property type="entry name" value="Outer membrane protein A"/>
    <property type="match status" value="1"/>
</dbReference>
<dbReference type="Gene3D" id="2.40.160.20">
    <property type="match status" value="1"/>
</dbReference>
<dbReference type="Gene3D" id="3.30.1330.60">
    <property type="entry name" value="OmpA-like domain"/>
    <property type="match status" value="1"/>
</dbReference>
<dbReference type="HAMAP" id="MF_00842">
    <property type="entry name" value="OmpA"/>
    <property type="match status" value="1"/>
</dbReference>
<dbReference type="InterPro" id="IPR050330">
    <property type="entry name" value="Bact_OuterMem_StrucFunc"/>
</dbReference>
<dbReference type="InterPro" id="IPR011250">
    <property type="entry name" value="OMP/PagP_b-brl"/>
</dbReference>
<dbReference type="InterPro" id="IPR006664">
    <property type="entry name" value="OMP_bac"/>
</dbReference>
<dbReference type="InterPro" id="IPR002368">
    <property type="entry name" value="OmpA"/>
</dbReference>
<dbReference type="InterPro" id="IPR006665">
    <property type="entry name" value="OmpA-like"/>
</dbReference>
<dbReference type="InterPro" id="IPR006690">
    <property type="entry name" value="OMPA-like_CS"/>
</dbReference>
<dbReference type="InterPro" id="IPR036737">
    <property type="entry name" value="OmpA-like_sf"/>
</dbReference>
<dbReference type="InterPro" id="IPR000498">
    <property type="entry name" value="OmpA-like_TM_dom"/>
</dbReference>
<dbReference type="NCBIfam" id="NF008071">
    <property type="entry name" value="PRK10808.1"/>
    <property type="match status" value="1"/>
</dbReference>
<dbReference type="PANTHER" id="PTHR30329:SF21">
    <property type="entry name" value="LIPOPROTEIN YIAD-RELATED"/>
    <property type="match status" value="1"/>
</dbReference>
<dbReference type="PANTHER" id="PTHR30329">
    <property type="entry name" value="STATOR ELEMENT OF FLAGELLAR MOTOR COMPLEX"/>
    <property type="match status" value="1"/>
</dbReference>
<dbReference type="Pfam" id="PF00691">
    <property type="entry name" value="OmpA"/>
    <property type="match status" value="1"/>
</dbReference>
<dbReference type="Pfam" id="PF01389">
    <property type="entry name" value="OmpA_membrane"/>
    <property type="match status" value="1"/>
</dbReference>
<dbReference type="PRINTS" id="PR01021">
    <property type="entry name" value="OMPADOMAIN"/>
</dbReference>
<dbReference type="PRINTS" id="PR01022">
    <property type="entry name" value="OUTRMMBRANEA"/>
</dbReference>
<dbReference type="SUPFAM" id="SSF56925">
    <property type="entry name" value="OMPA-like"/>
    <property type="match status" value="1"/>
</dbReference>
<dbReference type="SUPFAM" id="SSF103088">
    <property type="entry name" value="OmpA-like"/>
    <property type="match status" value="1"/>
</dbReference>
<dbReference type="PROSITE" id="PS01068">
    <property type="entry name" value="OMPA_1"/>
    <property type="match status" value="1"/>
</dbReference>
<dbReference type="PROSITE" id="PS51123">
    <property type="entry name" value="OMPA_2"/>
    <property type="match status" value="1"/>
</dbReference>
<proteinExistence type="inferred from homology"/>
<accession>P09146</accession>
<comment type="function">
    <text evidence="1">With TolR probably plays a role in maintaining the position of the peptidoglycan cell wall in the periplasm. Acts as a porin with low permeability that allows slow penetration of small solutes; an internal gate slows down solute passage.</text>
</comment>
<comment type="function">
    <text evidence="1">Required for conjugation with F-type plasmids; probably serves as the mating receptor on recipient cells.</text>
</comment>
<comment type="subunit">
    <text evidence="1">Monomer and homodimer.</text>
</comment>
<comment type="subcellular location">
    <subcellularLocation>
        <location evidence="1">Cell outer membrane</location>
        <topology evidence="1">Multi-pass membrane protein</topology>
    </subcellularLocation>
</comment>
<comment type="domain">
    <text evidence="1">The extracellular loops are most variable in sequence, and in some bacteria confer sensitivity to phage and/or colicins.</text>
</comment>
<comment type="similarity">
    <text evidence="1">Belongs to the outer membrane OOP (TC 1.B.6) superfamily. OmpA family.</text>
</comment>
<reference key="1">
    <citation type="journal article" date="1983" name="Eur. J. Biochem.">
        <title>Molecular characterization of the gene coding for major outer membrane protein OmpA from Enterobacter aerogenes.</title>
        <authorList>
            <person name="Braun G."/>
            <person name="Cole S.T."/>
        </authorList>
    </citation>
    <scope>NUCLEOTIDE SEQUENCE [GENOMIC DNA]</scope>
</reference>
<sequence length="350" mass="37575">MKKTAIAIAVALAGFATVAQAAPKDNTWYAGGKLGWSQFHDTGWYNSNLNNNGPTHESQLGAGAFGGYQVNPYLGFEMGYDWLGRMPYKGVKVNGAFSSQAVQLTAKLGYPITDDLDIYTRLGGMVWRADSSNSIAGDNHDTGVSPVFAGGVEWAMTRDIATRLEYQWVNNIGDAGTVGVRPDNGMLSVGVSYRFGQEDNAPVVAPAPAPAPEVTTKTFTLKSDVLFNFNKATLKPEGQQALDQLYTQLSNMDPKDGSAVVLGYTDRIGSEQYNQKLSEKRAQSVVDYLVAKGIPANKISARGMGESDPVTGNTCDNVKARAALIDCLAPDRRVAIEVKGYKDVVTQPQA</sequence>
<keyword id="KW-0998">Cell outer membrane</keyword>
<keyword id="KW-0184">Conjugation</keyword>
<keyword id="KW-1015">Disulfide bond</keyword>
<keyword id="KW-0406">Ion transport</keyword>
<keyword id="KW-0472">Membrane</keyword>
<keyword id="KW-0626">Porin</keyword>
<keyword id="KW-0677">Repeat</keyword>
<keyword id="KW-0732">Signal</keyword>
<keyword id="KW-0812">Transmembrane</keyword>
<keyword id="KW-1134">Transmembrane beta strand</keyword>
<keyword id="KW-0813">Transport</keyword>
<protein>
    <recommendedName>
        <fullName evidence="1">Outer membrane protein A</fullName>
    </recommendedName>
    <alternativeName>
        <fullName evidence="1">Outer membrane porin A</fullName>
    </alternativeName>
</protein>
<feature type="signal peptide" evidence="1">
    <location>
        <begin position="1"/>
        <end position="21"/>
    </location>
</feature>
<feature type="chain" id="PRO_0000020096" description="Outer membrane protein A" evidence="1">
    <location>
        <begin position="22"/>
        <end position="350"/>
    </location>
</feature>
<feature type="transmembrane region" description="Beta stranded" evidence="1">
    <location>
        <begin position="27"/>
        <end position="37"/>
    </location>
</feature>
<feature type="transmembrane region" description="Beta stranded" evidence="1">
    <location>
        <begin position="59"/>
        <end position="70"/>
    </location>
</feature>
<feature type="transmembrane region" description="Beta stranded" evidence="1">
    <location>
        <begin position="74"/>
        <end position="82"/>
    </location>
</feature>
<feature type="transmembrane region" description="Beta stranded" evidence="1">
    <location>
        <begin position="100"/>
        <end position="111"/>
    </location>
</feature>
<feature type="transmembrane region" description="Beta stranded" evidence="1">
    <location>
        <begin position="116"/>
        <end position="124"/>
    </location>
</feature>
<feature type="transmembrane region" description="Beta stranded" evidence="1">
    <location>
        <begin position="146"/>
        <end position="155"/>
    </location>
</feature>
<feature type="transmembrane region" description="Beta stranded" evidence="1">
    <location>
        <begin position="160"/>
        <end position="167"/>
    </location>
</feature>
<feature type="transmembrane region" description="Beta stranded" evidence="1">
    <location>
        <begin position="186"/>
        <end position="194"/>
    </location>
</feature>
<feature type="repeat" description="1">
    <location>
        <begin position="205"/>
        <end position="206"/>
    </location>
</feature>
<feature type="repeat" description="2">
    <location>
        <begin position="207"/>
        <end position="208"/>
    </location>
</feature>
<feature type="repeat" description="3">
    <location>
        <begin position="209"/>
        <end position="210"/>
    </location>
</feature>
<feature type="repeat" description="4">
    <location>
        <begin position="211"/>
        <end position="212"/>
    </location>
</feature>
<feature type="domain" description="OmpA-like" evidence="1">
    <location>
        <begin position="214"/>
        <end position="342"/>
    </location>
</feature>
<feature type="region of interest" description="4 X 2 AA tandem repeats of A-P">
    <location>
        <begin position="205"/>
        <end position="212"/>
    </location>
</feature>
<feature type="site" description="Part of salt bridge gating mechanism" evidence="1">
    <location>
        <position position="77"/>
    </location>
</feature>
<feature type="site" description="Part of salt bridge gating mechanism" evidence="1">
    <location>
        <position position="163"/>
    </location>
</feature>
<feature type="disulfide bond" evidence="1">
    <location>
        <begin position="315"/>
        <end position="327"/>
    </location>
</feature>
<evidence type="ECO:0000255" key="1">
    <source>
        <dbReference type="HAMAP-Rule" id="MF_00842"/>
    </source>
</evidence>
<organism>
    <name type="scientific">Klebsiella aerogenes</name>
    <name type="common">Enterobacter aerogenes</name>
    <dbReference type="NCBI Taxonomy" id="548"/>
    <lineage>
        <taxon>Bacteria</taxon>
        <taxon>Pseudomonadati</taxon>
        <taxon>Pseudomonadota</taxon>
        <taxon>Gammaproteobacteria</taxon>
        <taxon>Enterobacterales</taxon>
        <taxon>Enterobacteriaceae</taxon>
        <taxon>Klebsiella/Raoultella group</taxon>
        <taxon>Klebsiella</taxon>
    </lineage>
</organism>